<comment type="function">
    <text evidence="1">NQR complex catalyzes the reduction of ubiquinone-1 to ubiquinol by two successive reactions, coupled with the transport of Na(+) ions from the cytoplasm to the periplasm. NqrA to NqrE are probably involved in the second step, the conversion of ubisemiquinone to ubiquinol.</text>
</comment>
<comment type="catalytic activity">
    <reaction evidence="1">
        <text>a ubiquinone + n Na(+)(in) + NADH + H(+) = a ubiquinol + n Na(+)(out) + NAD(+)</text>
        <dbReference type="Rhea" id="RHEA:47748"/>
        <dbReference type="Rhea" id="RHEA-COMP:9565"/>
        <dbReference type="Rhea" id="RHEA-COMP:9566"/>
        <dbReference type="ChEBI" id="CHEBI:15378"/>
        <dbReference type="ChEBI" id="CHEBI:16389"/>
        <dbReference type="ChEBI" id="CHEBI:17976"/>
        <dbReference type="ChEBI" id="CHEBI:29101"/>
        <dbReference type="ChEBI" id="CHEBI:57540"/>
        <dbReference type="ChEBI" id="CHEBI:57945"/>
        <dbReference type="EC" id="7.2.1.1"/>
    </reaction>
</comment>
<comment type="subunit">
    <text evidence="1">Composed of six subunits; NqrA, NqrB, NqrC, NqrD, NqrE and NqrF.</text>
</comment>
<comment type="subcellular location">
    <subcellularLocation>
        <location evidence="1">Cell inner membrane</location>
        <topology evidence="1">Multi-pass membrane protein</topology>
    </subcellularLocation>
</comment>
<comment type="similarity">
    <text evidence="1">Belongs to the NqrDE/RnfAE family.</text>
</comment>
<protein>
    <recommendedName>
        <fullName evidence="1">Na(+)-translocating NADH-quinone reductase subunit D</fullName>
        <shortName evidence="1">Na(+)-NQR subunit D</shortName>
        <shortName evidence="1">Na(+)-translocating NQR subunit D</shortName>
        <ecNumber evidence="1">7.2.1.1</ecNumber>
    </recommendedName>
    <alternativeName>
        <fullName evidence="1">NQR complex subunit D</fullName>
    </alternativeName>
    <alternativeName>
        <fullName evidence="1">NQR-1 subunit D</fullName>
    </alternativeName>
</protein>
<organism>
    <name type="scientific">Pseudomonas paraeruginosa (strain DSM 24068 / PA7)</name>
    <name type="common">Pseudomonas aeruginosa (strain PA7)</name>
    <dbReference type="NCBI Taxonomy" id="381754"/>
    <lineage>
        <taxon>Bacteria</taxon>
        <taxon>Pseudomonadati</taxon>
        <taxon>Pseudomonadota</taxon>
        <taxon>Gammaproteobacteria</taxon>
        <taxon>Pseudomonadales</taxon>
        <taxon>Pseudomonadaceae</taxon>
        <taxon>Pseudomonas</taxon>
        <taxon>Pseudomonas paraeruginosa</taxon>
    </lineage>
</organism>
<sequence length="223" mass="24190">MAAQPTIREVLFNPVFQNNPIGLQILGICSALAVTSNLKTATVMAIALTLVTGFSNLFISMIRRQIPSSIRMIVQMVIIASLVIVVDQVLKAYAYSLSKQLSVFVGLIITNCIVMGRAEAFAMANPPLVSFFDGIGNGLGYSAMLLVLGFIRELFGAGKLYGISVLPTVNDGGWYQPNGLLLLPPSAFFLIGLIIWALRTWKKDQVEAPAYRMAPQVSSKEAY</sequence>
<reference key="1">
    <citation type="submission" date="2007-06" db="EMBL/GenBank/DDBJ databases">
        <authorList>
            <person name="Dodson R.J."/>
            <person name="Harkins D."/>
            <person name="Paulsen I.T."/>
        </authorList>
    </citation>
    <scope>NUCLEOTIDE SEQUENCE [LARGE SCALE GENOMIC DNA]</scope>
    <source>
        <strain>DSM 24068 / PA7</strain>
    </source>
</reference>
<dbReference type="EC" id="7.2.1.1" evidence="1"/>
<dbReference type="EMBL" id="CP000744">
    <property type="protein sequence ID" value="ABR85589.1"/>
    <property type="molecule type" value="Genomic_DNA"/>
</dbReference>
<dbReference type="SMR" id="A6V3A0"/>
<dbReference type="KEGG" id="pap:PSPA7_2163"/>
<dbReference type="HOGENOM" id="CLU_046659_1_1_6"/>
<dbReference type="Proteomes" id="UP000001582">
    <property type="component" value="Chromosome"/>
</dbReference>
<dbReference type="GO" id="GO:0005886">
    <property type="term" value="C:plasma membrane"/>
    <property type="evidence" value="ECO:0007669"/>
    <property type="project" value="UniProtKB-SubCell"/>
</dbReference>
<dbReference type="GO" id="GO:0016655">
    <property type="term" value="F:oxidoreductase activity, acting on NAD(P)H, quinone or similar compound as acceptor"/>
    <property type="evidence" value="ECO:0007669"/>
    <property type="project" value="UniProtKB-UniRule"/>
</dbReference>
<dbReference type="GO" id="GO:0006814">
    <property type="term" value="P:sodium ion transport"/>
    <property type="evidence" value="ECO:0007669"/>
    <property type="project" value="UniProtKB-UniRule"/>
</dbReference>
<dbReference type="HAMAP" id="MF_00428">
    <property type="entry name" value="NqrD"/>
    <property type="match status" value="1"/>
</dbReference>
<dbReference type="InterPro" id="IPR011292">
    <property type="entry name" value="NqrD"/>
</dbReference>
<dbReference type="InterPro" id="IPR003667">
    <property type="entry name" value="NqrDE/RnfAE"/>
</dbReference>
<dbReference type="NCBIfam" id="TIGR01939">
    <property type="entry name" value="nqrD"/>
    <property type="match status" value="1"/>
</dbReference>
<dbReference type="NCBIfam" id="NF006777">
    <property type="entry name" value="PRK09292.1"/>
    <property type="match status" value="1"/>
</dbReference>
<dbReference type="NCBIfam" id="NF009070">
    <property type="entry name" value="PRK12405.1"/>
    <property type="match status" value="1"/>
</dbReference>
<dbReference type="PANTHER" id="PTHR30586">
    <property type="entry name" value="ELECTRON TRANSPORT COMPLEX PROTEIN RNFE"/>
    <property type="match status" value="1"/>
</dbReference>
<dbReference type="PANTHER" id="PTHR30586:SF1">
    <property type="entry name" value="NA(+)-TRANSLOCATING NADH-QUINONE REDUCTASE SUBUNIT D"/>
    <property type="match status" value="1"/>
</dbReference>
<dbReference type="Pfam" id="PF02508">
    <property type="entry name" value="Rnf-Nqr"/>
    <property type="match status" value="1"/>
</dbReference>
<dbReference type="PIRSF" id="PIRSF006102">
    <property type="entry name" value="NQR_DE"/>
    <property type="match status" value="1"/>
</dbReference>
<accession>A6V3A0</accession>
<gene>
    <name evidence="1" type="primary">nqrD</name>
    <name type="ordered locus">PSPA7_2163</name>
</gene>
<evidence type="ECO:0000255" key="1">
    <source>
        <dbReference type="HAMAP-Rule" id="MF_00428"/>
    </source>
</evidence>
<feature type="chain" id="PRO_1000060160" description="Na(+)-translocating NADH-quinone reductase subunit D">
    <location>
        <begin position="1"/>
        <end position="223"/>
    </location>
</feature>
<feature type="transmembrane region" description="Helical" evidence="1">
    <location>
        <begin position="42"/>
        <end position="62"/>
    </location>
</feature>
<feature type="transmembrane region" description="Helical" evidence="1">
    <location>
        <begin position="66"/>
        <end position="86"/>
    </location>
</feature>
<feature type="transmembrane region" description="Helical" evidence="1">
    <location>
        <begin position="103"/>
        <end position="123"/>
    </location>
</feature>
<feature type="transmembrane region" description="Helical" evidence="1">
    <location>
        <begin position="131"/>
        <end position="151"/>
    </location>
</feature>
<feature type="transmembrane region" description="Helical" evidence="1">
    <location>
        <begin position="178"/>
        <end position="198"/>
    </location>
</feature>
<keyword id="KW-0997">Cell inner membrane</keyword>
<keyword id="KW-1003">Cell membrane</keyword>
<keyword id="KW-0406">Ion transport</keyword>
<keyword id="KW-0472">Membrane</keyword>
<keyword id="KW-0520">NAD</keyword>
<keyword id="KW-0915">Sodium</keyword>
<keyword id="KW-0739">Sodium transport</keyword>
<keyword id="KW-1278">Translocase</keyword>
<keyword id="KW-0812">Transmembrane</keyword>
<keyword id="KW-1133">Transmembrane helix</keyword>
<keyword id="KW-0813">Transport</keyword>
<keyword id="KW-0830">Ubiquinone</keyword>
<name>NQRD_PSEP7</name>
<proteinExistence type="inferred from homology"/>